<gene>
    <name evidence="1" type="primary">thrB</name>
    <name type="ordered locus">Tneu_0972</name>
</gene>
<organism>
    <name type="scientific">Pyrobaculum neutrophilum (strain DSM 2338 / JCM 9278 / NBRC 100436 / V24Sta)</name>
    <name type="common">Thermoproteus neutrophilus</name>
    <dbReference type="NCBI Taxonomy" id="444157"/>
    <lineage>
        <taxon>Archaea</taxon>
        <taxon>Thermoproteota</taxon>
        <taxon>Thermoprotei</taxon>
        <taxon>Thermoproteales</taxon>
        <taxon>Thermoproteaceae</taxon>
        <taxon>Pyrobaculum</taxon>
    </lineage>
</organism>
<sequence length="297" mass="30844">MRAPSTSANLGSGFDVVAVAHDAYFAEAYVKLTSGCGVDIKFRGFDPGGDNTVRRAFQHLFERLGRCWGVEAEVDNRIPIARGLGSSGASAVAALAAFIREAGLRVDPAAVVEAAGLGEAAAAGSPHFDNVAAAALGGAVVIASVKPLELVKFSPRLTFVVGVPDVPPMPEKTKVMRSVLPREVPFRTYVAQLARVSALVAGFARSDPRLVALGMSDEVVEPARAPHVPAYARVRRYALEAGALAVAISGAGPSMIALVEDRDSGAVRAAVERAYAEEGLRAEVKVASTAEGALKDL</sequence>
<keyword id="KW-0028">Amino-acid biosynthesis</keyword>
<keyword id="KW-0067">ATP-binding</keyword>
<keyword id="KW-0963">Cytoplasm</keyword>
<keyword id="KW-0418">Kinase</keyword>
<keyword id="KW-0547">Nucleotide-binding</keyword>
<keyword id="KW-0791">Threonine biosynthesis</keyword>
<keyword id="KW-0808">Transferase</keyword>
<accession>B1YDP4</accession>
<proteinExistence type="inferred from homology"/>
<protein>
    <recommendedName>
        <fullName evidence="1">Homoserine kinase</fullName>
        <shortName evidence="1">HK</shortName>
        <shortName evidence="1">HSK</shortName>
        <ecNumber evidence="1">2.7.1.39</ecNumber>
    </recommendedName>
</protein>
<reference key="1">
    <citation type="submission" date="2008-03" db="EMBL/GenBank/DDBJ databases">
        <title>Complete sequence of Thermoproteus neutrophilus V24Sta.</title>
        <authorList>
            <consortium name="US DOE Joint Genome Institute"/>
            <person name="Copeland A."/>
            <person name="Lucas S."/>
            <person name="Lapidus A."/>
            <person name="Glavina del Rio T."/>
            <person name="Dalin E."/>
            <person name="Tice H."/>
            <person name="Bruce D."/>
            <person name="Goodwin L."/>
            <person name="Pitluck S."/>
            <person name="Sims D."/>
            <person name="Brettin T."/>
            <person name="Detter J.C."/>
            <person name="Han C."/>
            <person name="Kuske C.R."/>
            <person name="Schmutz J."/>
            <person name="Larimer F."/>
            <person name="Land M."/>
            <person name="Hauser L."/>
            <person name="Kyrpides N."/>
            <person name="Mikhailova N."/>
            <person name="Biddle J.F."/>
            <person name="Zhang Z."/>
            <person name="Fitz-Gibbon S.T."/>
            <person name="Lowe T.M."/>
            <person name="Saltikov C."/>
            <person name="House C.H."/>
            <person name="Richardson P."/>
        </authorList>
    </citation>
    <scope>NUCLEOTIDE SEQUENCE [LARGE SCALE GENOMIC DNA]</scope>
    <source>
        <strain>DSM 2338 / JCM 9278 / NBRC 100436 / V24Sta</strain>
    </source>
</reference>
<feature type="chain" id="PRO_1000122448" description="Homoserine kinase">
    <location>
        <begin position="1"/>
        <end position="297"/>
    </location>
</feature>
<feature type="binding site" evidence="1">
    <location>
        <begin position="79"/>
        <end position="89"/>
    </location>
    <ligand>
        <name>ATP</name>
        <dbReference type="ChEBI" id="CHEBI:30616"/>
    </ligand>
</feature>
<name>KHSE_PYRNV</name>
<dbReference type="EC" id="2.7.1.39" evidence="1"/>
<dbReference type="EMBL" id="CP001014">
    <property type="protein sequence ID" value="ACB39907.1"/>
    <property type="molecule type" value="Genomic_DNA"/>
</dbReference>
<dbReference type="RefSeq" id="WP_012350327.1">
    <property type="nucleotide sequence ID" value="NC_010525.1"/>
</dbReference>
<dbReference type="SMR" id="B1YDP4"/>
<dbReference type="STRING" id="444157.Tneu_0972"/>
<dbReference type="GeneID" id="6164462"/>
<dbReference type="KEGG" id="tne:Tneu_0972"/>
<dbReference type="eggNOG" id="arCOG01027">
    <property type="taxonomic scope" value="Archaea"/>
</dbReference>
<dbReference type="HOGENOM" id="CLU_041243_1_1_2"/>
<dbReference type="OrthoDB" id="28273at2157"/>
<dbReference type="UniPathway" id="UPA00050">
    <property type="reaction ID" value="UER00064"/>
</dbReference>
<dbReference type="Proteomes" id="UP000001694">
    <property type="component" value="Chromosome"/>
</dbReference>
<dbReference type="GO" id="GO:0005737">
    <property type="term" value="C:cytoplasm"/>
    <property type="evidence" value="ECO:0007669"/>
    <property type="project" value="UniProtKB-SubCell"/>
</dbReference>
<dbReference type="GO" id="GO:0005524">
    <property type="term" value="F:ATP binding"/>
    <property type="evidence" value="ECO:0007669"/>
    <property type="project" value="UniProtKB-UniRule"/>
</dbReference>
<dbReference type="GO" id="GO:0004413">
    <property type="term" value="F:homoserine kinase activity"/>
    <property type="evidence" value="ECO:0007669"/>
    <property type="project" value="UniProtKB-UniRule"/>
</dbReference>
<dbReference type="GO" id="GO:0009088">
    <property type="term" value="P:threonine biosynthetic process"/>
    <property type="evidence" value="ECO:0007669"/>
    <property type="project" value="UniProtKB-UniRule"/>
</dbReference>
<dbReference type="Gene3D" id="3.30.230.10">
    <property type="match status" value="1"/>
</dbReference>
<dbReference type="Gene3D" id="3.30.70.890">
    <property type="entry name" value="GHMP kinase, C-terminal domain"/>
    <property type="match status" value="1"/>
</dbReference>
<dbReference type="HAMAP" id="MF_00384">
    <property type="entry name" value="Homoser_kinase"/>
    <property type="match status" value="1"/>
</dbReference>
<dbReference type="InterPro" id="IPR013750">
    <property type="entry name" value="GHMP_kinase_C_dom"/>
</dbReference>
<dbReference type="InterPro" id="IPR036554">
    <property type="entry name" value="GHMP_kinase_C_sf"/>
</dbReference>
<dbReference type="InterPro" id="IPR006204">
    <property type="entry name" value="GHMP_kinase_N_dom"/>
</dbReference>
<dbReference type="InterPro" id="IPR006203">
    <property type="entry name" value="GHMP_knse_ATP-bd_CS"/>
</dbReference>
<dbReference type="InterPro" id="IPR000870">
    <property type="entry name" value="Homoserine_kinase"/>
</dbReference>
<dbReference type="InterPro" id="IPR020568">
    <property type="entry name" value="Ribosomal_Su5_D2-typ_SF"/>
</dbReference>
<dbReference type="InterPro" id="IPR014721">
    <property type="entry name" value="Ribsml_uS5_D2-typ_fold_subgr"/>
</dbReference>
<dbReference type="NCBIfam" id="NF002288">
    <property type="entry name" value="PRK01212.1-4"/>
    <property type="match status" value="1"/>
</dbReference>
<dbReference type="PANTHER" id="PTHR20861:SF1">
    <property type="entry name" value="HOMOSERINE KINASE"/>
    <property type="match status" value="1"/>
</dbReference>
<dbReference type="PANTHER" id="PTHR20861">
    <property type="entry name" value="HOMOSERINE/4-DIPHOSPHOCYTIDYL-2-C-METHYL-D-ERYTHRITOL KINASE"/>
    <property type="match status" value="1"/>
</dbReference>
<dbReference type="Pfam" id="PF08544">
    <property type="entry name" value="GHMP_kinases_C"/>
    <property type="match status" value="1"/>
</dbReference>
<dbReference type="Pfam" id="PF00288">
    <property type="entry name" value="GHMP_kinases_N"/>
    <property type="match status" value="1"/>
</dbReference>
<dbReference type="PIRSF" id="PIRSF000676">
    <property type="entry name" value="Homoser_kin"/>
    <property type="match status" value="1"/>
</dbReference>
<dbReference type="PRINTS" id="PR00958">
    <property type="entry name" value="HOMSERKINASE"/>
</dbReference>
<dbReference type="SUPFAM" id="SSF55060">
    <property type="entry name" value="GHMP Kinase, C-terminal domain"/>
    <property type="match status" value="1"/>
</dbReference>
<dbReference type="SUPFAM" id="SSF54211">
    <property type="entry name" value="Ribosomal protein S5 domain 2-like"/>
    <property type="match status" value="1"/>
</dbReference>
<dbReference type="PROSITE" id="PS00627">
    <property type="entry name" value="GHMP_KINASES_ATP"/>
    <property type="match status" value="1"/>
</dbReference>
<comment type="function">
    <text evidence="1">Catalyzes the ATP-dependent phosphorylation of L-homoserine to L-homoserine phosphate.</text>
</comment>
<comment type="catalytic activity">
    <reaction evidence="1">
        <text>L-homoserine + ATP = O-phospho-L-homoserine + ADP + H(+)</text>
        <dbReference type="Rhea" id="RHEA:13985"/>
        <dbReference type="ChEBI" id="CHEBI:15378"/>
        <dbReference type="ChEBI" id="CHEBI:30616"/>
        <dbReference type="ChEBI" id="CHEBI:57476"/>
        <dbReference type="ChEBI" id="CHEBI:57590"/>
        <dbReference type="ChEBI" id="CHEBI:456216"/>
        <dbReference type="EC" id="2.7.1.39"/>
    </reaction>
</comment>
<comment type="pathway">
    <text evidence="1">Amino-acid biosynthesis; L-threonine biosynthesis; L-threonine from L-aspartate: step 4/5.</text>
</comment>
<comment type="subcellular location">
    <subcellularLocation>
        <location evidence="1">Cytoplasm</location>
    </subcellularLocation>
</comment>
<comment type="similarity">
    <text evidence="1">Belongs to the GHMP kinase family. Homoserine kinase subfamily.</text>
</comment>
<evidence type="ECO:0000255" key="1">
    <source>
        <dbReference type="HAMAP-Rule" id="MF_00384"/>
    </source>
</evidence>